<gene>
    <name evidence="1" type="primary">thiM</name>
    <name type="ordered locus">LL1264</name>
    <name type="ORF">L94809</name>
</gene>
<comment type="function">
    <text evidence="1">Catalyzes the phosphorylation of the hydroxyl group of 4-methyl-5-beta-hydroxyethylthiazole (THZ).</text>
</comment>
<comment type="catalytic activity">
    <reaction evidence="1">
        <text>5-(2-hydroxyethyl)-4-methylthiazole + ATP = 4-methyl-5-(2-phosphooxyethyl)-thiazole + ADP + H(+)</text>
        <dbReference type="Rhea" id="RHEA:24212"/>
        <dbReference type="ChEBI" id="CHEBI:15378"/>
        <dbReference type="ChEBI" id="CHEBI:17957"/>
        <dbReference type="ChEBI" id="CHEBI:30616"/>
        <dbReference type="ChEBI" id="CHEBI:58296"/>
        <dbReference type="ChEBI" id="CHEBI:456216"/>
        <dbReference type="EC" id="2.7.1.50"/>
    </reaction>
</comment>
<comment type="cofactor">
    <cofactor evidence="1">
        <name>Mg(2+)</name>
        <dbReference type="ChEBI" id="CHEBI:18420"/>
    </cofactor>
</comment>
<comment type="pathway">
    <text evidence="1">Cofactor biosynthesis; thiamine diphosphate biosynthesis; 4-methyl-5-(2-phosphoethyl)-thiazole from 5-(2-hydroxyethyl)-4-methylthiazole: step 1/1.</text>
</comment>
<comment type="similarity">
    <text evidence="1">Belongs to the Thz kinase family.</text>
</comment>
<dbReference type="EC" id="2.7.1.50" evidence="1"/>
<dbReference type="EMBL" id="AE005176">
    <property type="protein sequence ID" value="AAK05362.1"/>
    <property type="molecule type" value="Genomic_DNA"/>
</dbReference>
<dbReference type="PIR" id="H86782">
    <property type="entry name" value="H86782"/>
</dbReference>
<dbReference type="RefSeq" id="NP_267420.1">
    <property type="nucleotide sequence ID" value="NC_002662.1"/>
</dbReference>
<dbReference type="RefSeq" id="WP_003130220.1">
    <property type="nucleotide sequence ID" value="NC_002662.1"/>
</dbReference>
<dbReference type="SMR" id="Q9CG46"/>
<dbReference type="PaxDb" id="272623-L94809"/>
<dbReference type="EnsemblBacteria" id="AAK05362">
    <property type="protein sequence ID" value="AAK05362"/>
    <property type="gene ID" value="L94809"/>
</dbReference>
<dbReference type="KEGG" id="lla:L94809"/>
<dbReference type="PATRIC" id="fig|272623.7.peg.1366"/>
<dbReference type="eggNOG" id="COG2145">
    <property type="taxonomic scope" value="Bacteria"/>
</dbReference>
<dbReference type="HOGENOM" id="CLU_019943_0_0_9"/>
<dbReference type="OrthoDB" id="9778146at2"/>
<dbReference type="UniPathway" id="UPA00060">
    <property type="reaction ID" value="UER00139"/>
</dbReference>
<dbReference type="Proteomes" id="UP000002196">
    <property type="component" value="Chromosome"/>
</dbReference>
<dbReference type="GO" id="GO:0005524">
    <property type="term" value="F:ATP binding"/>
    <property type="evidence" value="ECO:0007669"/>
    <property type="project" value="UniProtKB-UniRule"/>
</dbReference>
<dbReference type="GO" id="GO:0004417">
    <property type="term" value="F:hydroxyethylthiazole kinase activity"/>
    <property type="evidence" value="ECO:0007669"/>
    <property type="project" value="UniProtKB-UniRule"/>
</dbReference>
<dbReference type="GO" id="GO:0000287">
    <property type="term" value="F:magnesium ion binding"/>
    <property type="evidence" value="ECO:0007669"/>
    <property type="project" value="UniProtKB-UniRule"/>
</dbReference>
<dbReference type="GO" id="GO:0009228">
    <property type="term" value="P:thiamine biosynthetic process"/>
    <property type="evidence" value="ECO:0007669"/>
    <property type="project" value="UniProtKB-KW"/>
</dbReference>
<dbReference type="GO" id="GO:0009229">
    <property type="term" value="P:thiamine diphosphate biosynthetic process"/>
    <property type="evidence" value="ECO:0007669"/>
    <property type="project" value="UniProtKB-UniRule"/>
</dbReference>
<dbReference type="CDD" id="cd01170">
    <property type="entry name" value="THZ_kinase"/>
    <property type="match status" value="1"/>
</dbReference>
<dbReference type="Gene3D" id="3.40.1190.20">
    <property type="match status" value="1"/>
</dbReference>
<dbReference type="HAMAP" id="MF_00228">
    <property type="entry name" value="Thz_kinase"/>
    <property type="match status" value="1"/>
</dbReference>
<dbReference type="InterPro" id="IPR000417">
    <property type="entry name" value="Hyethyz_kinase"/>
</dbReference>
<dbReference type="InterPro" id="IPR029056">
    <property type="entry name" value="Ribokinase-like"/>
</dbReference>
<dbReference type="NCBIfam" id="NF006830">
    <property type="entry name" value="PRK09355.1"/>
    <property type="match status" value="1"/>
</dbReference>
<dbReference type="Pfam" id="PF02110">
    <property type="entry name" value="HK"/>
    <property type="match status" value="1"/>
</dbReference>
<dbReference type="PIRSF" id="PIRSF000513">
    <property type="entry name" value="Thz_kinase"/>
    <property type="match status" value="1"/>
</dbReference>
<dbReference type="PRINTS" id="PR01099">
    <property type="entry name" value="HYETHTZKNASE"/>
</dbReference>
<dbReference type="SUPFAM" id="SSF53613">
    <property type="entry name" value="Ribokinase-like"/>
    <property type="match status" value="1"/>
</dbReference>
<reference key="1">
    <citation type="journal article" date="2001" name="Genome Res.">
        <title>The complete genome sequence of the lactic acid bacterium Lactococcus lactis ssp. lactis IL1403.</title>
        <authorList>
            <person name="Bolotin A."/>
            <person name="Wincker P."/>
            <person name="Mauger S."/>
            <person name="Jaillon O."/>
            <person name="Malarme K."/>
            <person name="Weissenbach J."/>
            <person name="Ehrlich S.D."/>
            <person name="Sorokin A."/>
        </authorList>
    </citation>
    <scope>NUCLEOTIDE SEQUENCE [LARGE SCALE GENOMIC DNA]</scope>
    <source>
        <strain>IL1403</strain>
    </source>
</reference>
<accession>Q9CG46</accession>
<feature type="chain" id="PRO_0000156939" description="Hydroxyethylthiazole kinase">
    <location>
        <begin position="1"/>
        <end position="250"/>
    </location>
</feature>
<feature type="binding site" evidence="1">
    <location>
        <position position="39"/>
    </location>
    <ligand>
        <name>substrate</name>
    </ligand>
</feature>
<feature type="binding site" evidence="1">
    <location>
        <position position="114"/>
    </location>
    <ligand>
        <name>ATP</name>
        <dbReference type="ChEBI" id="CHEBI:30616"/>
    </ligand>
</feature>
<feature type="binding site" evidence="1">
    <location>
        <position position="159"/>
    </location>
    <ligand>
        <name>ATP</name>
        <dbReference type="ChEBI" id="CHEBI:30616"/>
    </ligand>
</feature>
<feature type="binding site" evidence="1">
    <location>
        <position position="186"/>
    </location>
    <ligand>
        <name>substrate</name>
    </ligand>
</feature>
<proteinExistence type="inferred from homology"/>
<organism>
    <name type="scientific">Lactococcus lactis subsp. lactis (strain IL1403)</name>
    <name type="common">Streptococcus lactis</name>
    <dbReference type="NCBI Taxonomy" id="272623"/>
    <lineage>
        <taxon>Bacteria</taxon>
        <taxon>Bacillati</taxon>
        <taxon>Bacillota</taxon>
        <taxon>Bacilli</taxon>
        <taxon>Lactobacillales</taxon>
        <taxon>Streptococcaceae</taxon>
        <taxon>Lactococcus</taxon>
    </lineage>
</organism>
<sequence>MSILEKIQEKQPLILNLANFVTPQRVADAISFAGGSPLMTAEISESETLVEIADAVVVNIGTISEKDYPLFLTICQLANQKHKPLILDPVAVNVPFRANFVKRLMQEVKFDIIRGNSAEIAWFADKESLNKGIDALESNLEVEHARVAAQKTGAVIIQTGKVDVISNGFEELFVETDSPLFKINVGCGDMLSAIVGTFAAVSDDLFKAAYEATEFFGESGVKATEQVENLPGNFVNRFLDKIYQATQEVI</sequence>
<protein>
    <recommendedName>
        <fullName evidence="1">Hydroxyethylthiazole kinase</fullName>
        <ecNumber evidence="1">2.7.1.50</ecNumber>
    </recommendedName>
    <alternativeName>
        <fullName evidence="1">4-methyl-5-beta-hydroxyethylthiazole kinase</fullName>
        <shortName evidence="1">TH kinase</shortName>
        <shortName evidence="1">Thz kinase</shortName>
    </alternativeName>
</protein>
<evidence type="ECO:0000255" key="1">
    <source>
        <dbReference type="HAMAP-Rule" id="MF_00228"/>
    </source>
</evidence>
<keyword id="KW-0067">ATP-binding</keyword>
<keyword id="KW-0418">Kinase</keyword>
<keyword id="KW-0460">Magnesium</keyword>
<keyword id="KW-0479">Metal-binding</keyword>
<keyword id="KW-0547">Nucleotide-binding</keyword>
<keyword id="KW-1185">Reference proteome</keyword>
<keyword id="KW-0784">Thiamine biosynthesis</keyword>
<keyword id="KW-0808">Transferase</keyword>
<name>THIM_LACLA</name>